<organism>
    <name type="scientific">Cupriavidus metallidurans (strain ATCC 43123 / DSM 2839 / NBRC 102507 / CH34)</name>
    <name type="common">Ralstonia metallidurans</name>
    <dbReference type="NCBI Taxonomy" id="266264"/>
    <lineage>
        <taxon>Bacteria</taxon>
        <taxon>Pseudomonadati</taxon>
        <taxon>Pseudomonadota</taxon>
        <taxon>Betaproteobacteria</taxon>
        <taxon>Burkholderiales</taxon>
        <taxon>Burkholderiaceae</taxon>
        <taxon>Cupriavidus</taxon>
    </lineage>
</organism>
<sequence length="77" mass="8517">MGSFSIWHWLIVLVIVMLVFGTKKLRNIGQDLGGAVKGFKDGMKEGNTDEPATPTPAKELRDSTTIDVEAKEKSRQQ</sequence>
<protein>
    <recommendedName>
        <fullName evidence="1">Sec-independent protein translocase protein TatA</fullName>
    </recommendedName>
</protein>
<dbReference type="EMBL" id="CP000352">
    <property type="protein sequence ID" value="ABF10109.1"/>
    <property type="molecule type" value="Genomic_DNA"/>
</dbReference>
<dbReference type="RefSeq" id="WP_011517718.1">
    <property type="nucleotide sequence ID" value="NC_007973.1"/>
</dbReference>
<dbReference type="SMR" id="Q1LIB7"/>
<dbReference type="STRING" id="266264.Rmet_3237"/>
<dbReference type="KEGG" id="rme:Rmet_3237"/>
<dbReference type="eggNOG" id="COG1826">
    <property type="taxonomic scope" value="Bacteria"/>
</dbReference>
<dbReference type="HOGENOM" id="CLU_086034_5_3_4"/>
<dbReference type="Proteomes" id="UP000002429">
    <property type="component" value="Chromosome"/>
</dbReference>
<dbReference type="GO" id="GO:0033281">
    <property type="term" value="C:TAT protein transport complex"/>
    <property type="evidence" value="ECO:0007669"/>
    <property type="project" value="UniProtKB-UniRule"/>
</dbReference>
<dbReference type="GO" id="GO:0008320">
    <property type="term" value="F:protein transmembrane transporter activity"/>
    <property type="evidence" value="ECO:0007669"/>
    <property type="project" value="UniProtKB-UniRule"/>
</dbReference>
<dbReference type="GO" id="GO:0043953">
    <property type="term" value="P:protein transport by the Tat complex"/>
    <property type="evidence" value="ECO:0007669"/>
    <property type="project" value="UniProtKB-UniRule"/>
</dbReference>
<dbReference type="Gene3D" id="1.20.5.3310">
    <property type="match status" value="1"/>
</dbReference>
<dbReference type="HAMAP" id="MF_00236">
    <property type="entry name" value="TatA_E"/>
    <property type="match status" value="1"/>
</dbReference>
<dbReference type="InterPro" id="IPR003369">
    <property type="entry name" value="TatA/B/E"/>
</dbReference>
<dbReference type="InterPro" id="IPR006312">
    <property type="entry name" value="TatA/E"/>
</dbReference>
<dbReference type="NCBIfam" id="NF002813">
    <property type="entry name" value="PRK02958.1"/>
    <property type="match status" value="1"/>
</dbReference>
<dbReference type="NCBIfam" id="TIGR01411">
    <property type="entry name" value="tatAE"/>
    <property type="match status" value="1"/>
</dbReference>
<dbReference type="PANTHER" id="PTHR42982">
    <property type="entry name" value="SEC-INDEPENDENT PROTEIN TRANSLOCASE PROTEIN TATA"/>
    <property type="match status" value="1"/>
</dbReference>
<dbReference type="PANTHER" id="PTHR42982:SF1">
    <property type="entry name" value="SEC-INDEPENDENT PROTEIN TRANSLOCASE PROTEIN TATA"/>
    <property type="match status" value="1"/>
</dbReference>
<dbReference type="Pfam" id="PF02416">
    <property type="entry name" value="TatA_B_E"/>
    <property type="match status" value="1"/>
</dbReference>
<proteinExistence type="inferred from homology"/>
<gene>
    <name evidence="1" type="primary">tatA</name>
    <name type="ordered locus">Rmet_3237</name>
</gene>
<feature type="chain" id="PRO_1000044428" description="Sec-independent protein translocase protein TatA">
    <location>
        <begin position="1"/>
        <end position="77"/>
    </location>
</feature>
<feature type="transmembrane region" description="Helical" evidence="1">
    <location>
        <begin position="1"/>
        <end position="21"/>
    </location>
</feature>
<feature type="region of interest" description="Disordered" evidence="2">
    <location>
        <begin position="40"/>
        <end position="77"/>
    </location>
</feature>
<feature type="compositionally biased region" description="Basic and acidic residues" evidence="2">
    <location>
        <begin position="58"/>
        <end position="77"/>
    </location>
</feature>
<accession>Q1LIB7</accession>
<reference key="1">
    <citation type="journal article" date="2010" name="PLoS ONE">
        <title>The complete genome sequence of Cupriavidus metallidurans strain CH34, a master survivalist in harsh and anthropogenic environments.</title>
        <authorList>
            <person name="Janssen P.J."/>
            <person name="Van Houdt R."/>
            <person name="Moors H."/>
            <person name="Monsieurs P."/>
            <person name="Morin N."/>
            <person name="Michaux A."/>
            <person name="Benotmane M.A."/>
            <person name="Leys N."/>
            <person name="Vallaeys T."/>
            <person name="Lapidus A."/>
            <person name="Monchy S."/>
            <person name="Medigue C."/>
            <person name="Taghavi S."/>
            <person name="McCorkle S."/>
            <person name="Dunn J."/>
            <person name="van der Lelie D."/>
            <person name="Mergeay M."/>
        </authorList>
    </citation>
    <scope>NUCLEOTIDE SEQUENCE [LARGE SCALE GENOMIC DNA]</scope>
    <source>
        <strain>ATCC 43123 / DSM 2839 / NBRC 102507 / CH34</strain>
    </source>
</reference>
<evidence type="ECO:0000255" key="1">
    <source>
        <dbReference type="HAMAP-Rule" id="MF_00236"/>
    </source>
</evidence>
<evidence type="ECO:0000256" key="2">
    <source>
        <dbReference type="SAM" id="MobiDB-lite"/>
    </source>
</evidence>
<name>TATA_CUPMC</name>
<keyword id="KW-0997">Cell inner membrane</keyword>
<keyword id="KW-1003">Cell membrane</keyword>
<keyword id="KW-0472">Membrane</keyword>
<keyword id="KW-0653">Protein transport</keyword>
<keyword id="KW-1185">Reference proteome</keyword>
<keyword id="KW-0811">Translocation</keyword>
<keyword id="KW-0812">Transmembrane</keyword>
<keyword id="KW-1133">Transmembrane helix</keyword>
<keyword id="KW-0813">Transport</keyword>
<comment type="function">
    <text evidence="1">Part of the twin-arginine translocation (Tat) system that transports large folded proteins containing a characteristic twin-arginine motif in their signal peptide across membranes. TatA could form the protein-conducting channel of the Tat system.</text>
</comment>
<comment type="subunit">
    <text evidence="1">The Tat system comprises two distinct complexes: a TatABC complex, containing multiple copies of TatA, TatB and TatC subunits, and a separate TatA complex, containing only TatA subunits. Substrates initially bind to the TatABC complex, which probably triggers association of the separate TatA complex to form the active translocon.</text>
</comment>
<comment type="subcellular location">
    <subcellularLocation>
        <location evidence="1">Cell inner membrane</location>
        <topology evidence="1">Single-pass membrane protein</topology>
    </subcellularLocation>
</comment>
<comment type="similarity">
    <text evidence="1">Belongs to the TatA/E family.</text>
</comment>